<organism>
    <name type="scientific">Cassava vein mosaic virus</name>
    <name type="common">CsVMV</name>
    <dbReference type="NCBI Taxonomy" id="38062"/>
    <lineage>
        <taxon>Viruses</taxon>
        <taxon>Riboviria</taxon>
        <taxon>Pararnavirae</taxon>
        <taxon>Artverviricota</taxon>
        <taxon>Revtraviricetes</taxon>
        <taxon>Ortervirales</taxon>
        <taxon>Caulimoviridae</taxon>
        <taxon>Cavemovirus</taxon>
        <taxon>Cavemovirus venamanihotis</taxon>
    </lineage>
</organism>
<evidence type="ECO:0000255" key="1"/>
<evidence type="ECO:0000255" key="2">
    <source>
        <dbReference type="PROSITE-ProRule" id="PRU00047"/>
    </source>
</evidence>
<evidence type="ECO:0000256" key="3">
    <source>
        <dbReference type="SAM" id="MobiDB-lite"/>
    </source>
</evidence>
<evidence type="ECO:0000305" key="4"/>
<protein>
    <recommendedName>
        <fullName>Putative Polyprotein CP</fullName>
    </recommendedName>
    <component>
        <recommendedName>
            <fullName>Capsid protein</fullName>
        </recommendedName>
        <alternativeName>
            <fullName>Coat protein</fullName>
            <shortName>CP</shortName>
        </alternativeName>
    </component>
    <component>
        <recommendedName>
            <fullName>Movement protein</fullName>
            <shortName>Mov</shortName>
        </recommendedName>
        <alternativeName>
            <fullName>Cell-to-cell transport protein</fullName>
        </alternativeName>
    </component>
</protein>
<gene>
    <name type="ORF">ORF 1</name>
</gene>
<accession>Q66283</accession>
<keyword id="KW-0167">Capsid protein</keyword>
<keyword id="KW-0175">Coiled coil</keyword>
<keyword id="KW-0479">Metal-binding</keyword>
<keyword id="KW-1185">Reference proteome</keyword>
<keyword id="KW-0946">Virion</keyword>
<keyword id="KW-0862">Zinc</keyword>
<keyword id="KW-0863">Zinc-finger</keyword>
<name>CP_CSVMV</name>
<proteinExistence type="predicted"/>
<comment type="subcellular location">
    <molecule>Capsid protein</molecule>
    <subcellularLocation>
        <location evidence="4">Virion</location>
    </subcellularLocation>
</comment>
<organismHost>
    <name type="scientific">Manihot esculenta</name>
    <name type="common">Cassava</name>
    <name type="synonym">Jatropha manihot</name>
    <dbReference type="NCBI Taxonomy" id="3983"/>
</organismHost>
<sequence length="1372" mass="163728">MDSKDFTQLNLEEHSYKVNREKLPIDSYIQYGGFTYANFTPYIIHGDDGFGEHKQLNWTNKLLWNKLGKLNIKDTQILMQNNISEEQHNELISLEAQKIARENLADRINYLQNINTSIDFKLWKMNKENLERQELLLRQINELKEEIKSLKNIPSTVAIIPTNTYTINMIRTETEDWKYFKYIEKELVQNKTEAIAKILDNSYIINDNLGLLYERYEEINPTPKPYKRPETIFDTPQYAKYIRNQKRQEEYEKQQELKKENENKEYQEFLEWKEKQQKDKGKGIQTVYPTLIIPDIKPEKQKKEDMMLEMIKNLQNELEQLKIQRHKEHEKQAELTKIQMLEEELEEELDPDNLEKEVLNNIQNIQISSDISESSEINEISDNETEQISGSDSDYNNEQINVKIEGEEYEYKDNYRYYKPQPPYYKKDIRRERQYKGQSSQRADYIKNRREQFESTYQANMNTTINDSGEILNLDCTTPEEAEDRIQKWTQSMSIALVKQQLSNEQAKQFIRRTFIGNVKEWYKNLTNEAKQKLEGNAPLLSLTHMELGLRAEFGKLGIESDVEKHEKKTSIARHKILQLQICSMDHQNLNAYLCEFQEYYYSANYTEAESENILNMFYSKLPEPWGQQVLNGYLSEIKGKNLLDSIGARMTYLQEFISDKCKENWTQKQARKIQLSKNLDCSYYEVGKYGCKQIRPHKRKRYYKKYIPIKRKYFNKKRYKKYYRPKKFLKRKNPHKACKCYNCGEEGHISPNCKKPKKKTRINNLEALEFKNTEMENLEFETNKNDIIWVEEIEVIQPLHYEEEEKYKGNYSDRILQNPYYINSISIEELDNLDWEFEYQEDIEDDLEYQNFVYQESNDNWYSDQENWYSDEQYLGIYMFIGETSGENNQDNMEGIIKEYNKTEPEKINKIIFTSEKFKQIMENDLNMTKDKIFHNNKLKKLFGKKEIEYYIVTDIEHPIDVKYVQNQDKIINLPLYNQEIFENEIQKIPDKDQNKIRNIHLAAVEIVVKAYFREGIDTPFEIILCDDRITYPQEGSLVEVLIGNLIYQKVKFTKIINYSISIEDKNLDKSLVMYWNLEGIKMIKDSKIFSIRLRNLYVLSNKHIVKNKKQYNGNIIIEPIFQDVIQNNNRNYIEYGKPGKFDRTKLKSYSRRFNEPLRLDDRTNIQREKDQIEKADHNLELQKELNNLNYYSQQGQSSNVLDIPKILKIENTKNNYKQFHIIGKITEGRLNKFYPILIDTGAADSYISSKILEDEKLVSNKLSKVVTSYNADNEKHIYDRNTEVIIELIDKNNEKYKINFIGLVDQLRLLEGGKAEILLGMNILQNLKPYCITDDYLEINLGFRCIKINRIKKDIFEIREDLQQMNVLNE</sequence>
<feature type="chain" id="PRO_0000397902" description="Putative Polyprotein CP">
    <location>
        <begin position="1"/>
        <end position="1372"/>
    </location>
</feature>
<feature type="chain" id="PRO_0000397903" description="Capsid protein" evidence="1">
    <location>
        <begin position="330" status="uncertain"/>
        <end position="814" status="uncertain"/>
    </location>
</feature>
<feature type="chain" id="PRO_0000397904" description="Movement protein" evidence="1">
    <location>
        <begin position="880" status="uncertain"/>
        <end position="1207" status="uncertain"/>
    </location>
</feature>
<feature type="zinc finger region" description="CCHC-type" evidence="2">
    <location>
        <begin position="739"/>
        <end position="756"/>
    </location>
</feature>
<feature type="region of interest" description="Disordered" evidence="3">
    <location>
        <begin position="372"/>
        <end position="398"/>
    </location>
</feature>
<feature type="coiled-coil region" evidence="1">
    <location>
        <begin position="126"/>
        <end position="153"/>
    </location>
</feature>
<feature type="coiled-coil region" evidence="1">
    <location>
        <begin position="299"/>
        <end position="350"/>
    </location>
</feature>
<feature type="coiled-coil region" evidence="1">
    <location>
        <begin position="1162"/>
        <end position="1189"/>
    </location>
</feature>
<feature type="compositionally biased region" description="Polar residues" evidence="3">
    <location>
        <begin position="386"/>
        <end position="398"/>
    </location>
</feature>
<reference key="1">
    <citation type="journal article" date="1998" name="Arch. Virol.">
        <title>Cassava vein mosaic virus (CsVMV), type species for a new genus of plant double stranded DNA viruses?</title>
        <authorList>
            <person name="de Kochko A."/>
            <person name="Verdaguer B."/>
            <person name="Taylor N."/>
            <person name="Carcamo R."/>
            <person name="Beachy R.N."/>
            <person name="Fauquet C."/>
        </authorList>
    </citation>
    <scope>NUCLEOTIDE SEQUENCE [GENOMIC DNA]</scope>
</reference>
<reference key="2">
    <citation type="submission" date="1996-06" db="EMBL/GenBank/DDBJ databases">
        <authorList>
            <person name="Kochko de A."/>
            <person name="Verdaguer B."/>
            <person name="Beachy R.N."/>
            <person name="Fauquet C."/>
        </authorList>
    </citation>
    <scope>NUCLEOTIDE SEQUENCE [GENOMIC DNA]</scope>
</reference>
<dbReference type="EMBL" id="U59751">
    <property type="protein sequence ID" value="AAB03325.1"/>
    <property type="molecule type" value="Genomic_DNA"/>
</dbReference>
<dbReference type="RefSeq" id="NP_056846.1">
    <property type="nucleotide sequence ID" value="NC_001648.1"/>
</dbReference>
<dbReference type="SMR" id="Q66283"/>
<dbReference type="KEGG" id="vg:1403415"/>
<dbReference type="Proteomes" id="UP000002244">
    <property type="component" value="Genome"/>
</dbReference>
<dbReference type="GO" id="GO:0019028">
    <property type="term" value="C:viral capsid"/>
    <property type="evidence" value="ECO:0007669"/>
    <property type="project" value="UniProtKB-KW"/>
</dbReference>
<dbReference type="GO" id="GO:0003676">
    <property type="term" value="F:nucleic acid binding"/>
    <property type="evidence" value="ECO:0007669"/>
    <property type="project" value="InterPro"/>
</dbReference>
<dbReference type="GO" id="GO:0008270">
    <property type="term" value="F:zinc ion binding"/>
    <property type="evidence" value="ECO:0007669"/>
    <property type="project" value="UniProtKB-KW"/>
</dbReference>
<dbReference type="CDD" id="cd00303">
    <property type="entry name" value="retropepsin_like"/>
    <property type="match status" value="1"/>
</dbReference>
<dbReference type="Gene3D" id="2.40.70.10">
    <property type="entry name" value="Acid Proteases"/>
    <property type="match status" value="1"/>
</dbReference>
<dbReference type="Gene3D" id="4.10.60.10">
    <property type="entry name" value="Zinc finger, CCHC-type"/>
    <property type="match status" value="1"/>
</dbReference>
<dbReference type="InterPro" id="IPR051596">
    <property type="entry name" value="Caulimoviridae_Movement"/>
</dbReference>
<dbReference type="InterPro" id="IPR021109">
    <property type="entry name" value="Peptidase_aspartic_dom_sf"/>
</dbReference>
<dbReference type="InterPro" id="IPR028919">
    <property type="entry name" value="Viral_movement"/>
</dbReference>
<dbReference type="InterPro" id="IPR001878">
    <property type="entry name" value="Znf_CCHC"/>
</dbReference>
<dbReference type="InterPro" id="IPR036875">
    <property type="entry name" value="Znf_CCHC_sf"/>
</dbReference>
<dbReference type="PANTHER" id="PTHR47599">
    <property type="entry name" value="CELL-TO-CELL MOVEMENT PROTEIN"/>
    <property type="match status" value="1"/>
</dbReference>
<dbReference type="PANTHER" id="PTHR47599:SF3">
    <property type="entry name" value="CELL-TO-CELL MOVEMENT PROTEIN"/>
    <property type="match status" value="1"/>
</dbReference>
<dbReference type="Pfam" id="PF01107">
    <property type="entry name" value="MP"/>
    <property type="match status" value="1"/>
</dbReference>
<dbReference type="Pfam" id="PF00098">
    <property type="entry name" value="zf-CCHC"/>
    <property type="match status" value="1"/>
</dbReference>
<dbReference type="SMART" id="SM00343">
    <property type="entry name" value="ZnF_C2HC"/>
    <property type="match status" value="1"/>
</dbReference>
<dbReference type="SUPFAM" id="SSF57756">
    <property type="entry name" value="Retrovirus zinc finger-like domains"/>
    <property type="match status" value="1"/>
</dbReference>
<dbReference type="PROSITE" id="PS50158">
    <property type="entry name" value="ZF_CCHC"/>
    <property type="match status" value="1"/>
</dbReference>